<sequence length="49" mass="5300">KLGDQRQIDIASWNTFDFGGVXKANANTGIGNVVIERTDNPNTVPYIPA</sequence>
<comment type="function">
    <text evidence="1">Very potent toxin that exhibits a wide range of toxicities over various organisms and cells including brine shrimp larvae (Artemia salina), sea hare eggs (Aplysia kurodai), mice, and cultured mammalian cells (PubMed:30965587). A SOR-containing fraction cleaves plasmid DNA in a bivalent metal ion dependent manner suggesting genotoxicity of SOR (PubMed:30965587).</text>
</comment>
<comment type="subcellular location">
    <subcellularLocation>
        <location evidence="4">Secreted</location>
    </subcellularLocation>
</comment>
<comment type="mass spectrometry" mass="108.7" method="MALDI" evidence="1"/>
<comment type="toxic dose">
    <text evidence="1">LD(50) is 0.287 ug/kg by intracerebroventricular injection into mice (PubMed:30965587), when observation is prolonged over 48-54 hours after injection. LD(50) is 0.34 ug/mL when injected into brine shrimp (PubMed:30965587).</text>
</comment>
<comment type="miscellaneous">
    <text evidence="1">Negative results: does not show any hemagglutinating or hemolytic activity against rabbit erythrocytes (PubMed:30965587). Does not show antimicrobial activity against both Gram-positive and -negative bacteria (PubMed:30965587).</text>
</comment>
<comment type="caution">
    <text evidence="3">About 18 sequence fragments were determined for this protein. Only the 2 longest are indicated here.</text>
</comment>
<reference key="1">
    <citation type="journal article" date="2019" name="Mar. Drugs">
        <title>Soritechodesidine, a novel proteinous toxin from the Okinawan marine sponge Spongosorites sp.</title>
        <authorList>
            <person name="Sakai R."/>
            <person name="Tanano K."/>
            <person name="Ono T."/>
            <person name="Kitano M."/>
            <person name="Iida Y."/>
            <person name="Nakano K."/>
            <person name="Jimbo M."/>
        </authorList>
    </citation>
    <scope>PROTEIN SEQUENCE</scope>
    <scope>MASS SPECTROMETRY</scope>
</reference>
<keyword id="KW-0903">Direct protein sequencing</keyword>
<keyword id="KW-0964">Secreted</keyword>
<keyword id="KW-0800">Toxin</keyword>
<organism>
    <name type="scientific">Spongosorites sp. (strain QM G324170)</name>
    <name type="common">Okinawan marine Sponge</name>
    <dbReference type="NCBI Taxonomy" id="2582856"/>
    <lineage>
        <taxon>Eukaryota</taxon>
        <taxon>Metazoa</taxon>
        <taxon>Porifera</taxon>
        <taxon>Demospongiae</taxon>
        <taxon>Heteroscleromorpha</taxon>
        <taxon>Suberitida</taxon>
        <taxon>Halichondriidae</taxon>
        <taxon>Spongosorites</taxon>
    </lineage>
</organism>
<name>SOR_SPOSM</name>
<accession>P0DSO7</accession>
<evidence type="ECO:0000269" key="1">
    <source>
    </source>
</evidence>
<evidence type="ECO:0000303" key="2">
    <source>
    </source>
</evidence>
<evidence type="ECO:0000305" key="3"/>
<evidence type="ECO:0000305" key="4">
    <source>
    </source>
</evidence>
<protein>
    <recommendedName>
        <fullName evidence="2">Soritesidine</fullName>
        <shortName evidence="2">SOR</shortName>
    </recommendedName>
</protein>
<dbReference type="GO" id="GO:0005576">
    <property type="term" value="C:extracellular region"/>
    <property type="evidence" value="ECO:0007669"/>
    <property type="project" value="UniProtKB-SubCell"/>
</dbReference>
<dbReference type="GO" id="GO:0090729">
    <property type="term" value="F:toxin activity"/>
    <property type="evidence" value="ECO:0007669"/>
    <property type="project" value="UniProtKB-KW"/>
</dbReference>
<feature type="chain" id="PRO_0000447634" description="Soritesidine" evidence="1">
    <location>
        <begin position="1"/>
        <end position="49" status="greater than"/>
    </location>
</feature>
<feature type="non-consecutive residues">
    <location>
        <begin position="25"/>
        <end position="26"/>
    </location>
</feature>
<feature type="non-terminal residue">
    <location>
        <position position="49"/>
    </location>
</feature>
<proteinExistence type="evidence at protein level"/>